<gene>
    <name evidence="1" type="primary">rsmA</name>
    <name evidence="1" type="synonym">ksgA</name>
    <name type="ordered locus">RBE_0204</name>
</gene>
<keyword id="KW-0002">3D-structure</keyword>
<keyword id="KW-0963">Cytoplasm</keyword>
<keyword id="KW-0489">Methyltransferase</keyword>
<keyword id="KW-0694">RNA-binding</keyword>
<keyword id="KW-0698">rRNA processing</keyword>
<keyword id="KW-0949">S-adenosyl-L-methionine</keyword>
<keyword id="KW-0808">Transferase</keyword>
<dbReference type="EC" id="2.1.1.182" evidence="1"/>
<dbReference type="EMBL" id="CP000087">
    <property type="protein sequence ID" value="ABE04285.1"/>
    <property type="molecule type" value="Genomic_DNA"/>
</dbReference>
<dbReference type="RefSeq" id="WP_011476898.1">
    <property type="nucleotide sequence ID" value="NC_007940.1"/>
</dbReference>
<dbReference type="PDB" id="4JXJ">
    <property type="method" value="X-ray"/>
    <property type="resolution" value="2.00 A"/>
    <property type="chains" value="A=1-268"/>
</dbReference>
<dbReference type="PDBsum" id="4JXJ"/>
<dbReference type="SMR" id="Q1RK29"/>
<dbReference type="KEGG" id="rbe:RBE_0204"/>
<dbReference type="eggNOG" id="COG0030">
    <property type="taxonomic scope" value="Bacteria"/>
</dbReference>
<dbReference type="HOGENOM" id="CLU_041220_0_1_5"/>
<dbReference type="OrthoDB" id="9814755at2"/>
<dbReference type="EvolutionaryTrace" id="Q1RK29"/>
<dbReference type="Proteomes" id="UP000001951">
    <property type="component" value="Chromosome"/>
</dbReference>
<dbReference type="GO" id="GO:0005737">
    <property type="term" value="C:cytoplasm"/>
    <property type="evidence" value="ECO:0007669"/>
    <property type="project" value="UniProtKB-SubCell"/>
</dbReference>
<dbReference type="GO" id="GO:0052908">
    <property type="term" value="F:16S rRNA (adenine(1518)-N(6)/adenine(1519)-N(6))-dimethyltransferase activity"/>
    <property type="evidence" value="ECO:0007669"/>
    <property type="project" value="UniProtKB-EC"/>
</dbReference>
<dbReference type="GO" id="GO:0003723">
    <property type="term" value="F:RNA binding"/>
    <property type="evidence" value="ECO:0007669"/>
    <property type="project" value="UniProtKB-KW"/>
</dbReference>
<dbReference type="CDD" id="cd02440">
    <property type="entry name" value="AdoMet_MTases"/>
    <property type="match status" value="1"/>
</dbReference>
<dbReference type="Gene3D" id="1.10.8.100">
    <property type="entry name" value="Ribosomal RNA adenine dimethylase-like, domain 2"/>
    <property type="match status" value="1"/>
</dbReference>
<dbReference type="Gene3D" id="3.40.50.150">
    <property type="entry name" value="Vaccinia Virus protein VP39"/>
    <property type="match status" value="1"/>
</dbReference>
<dbReference type="HAMAP" id="MF_00607">
    <property type="entry name" value="16SrRNA_methyltr_A"/>
    <property type="match status" value="1"/>
</dbReference>
<dbReference type="InterPro" id="IPR001737">
    <property type="entry name" value="KsgA/Erm"/>
</dbReference>
<dbReference type="InterPro" id="IPR023165">
    <property type="entry name" value="rRNA_Ade_diMease-like_C"/>
</dbReference>
<dbReference type="InterPro" id="IPR020596">
    <property type="entry name" value="rRNA_Ade_Mease_Trfase_CS"/>
</dbReference>
<dbReference type="InterPro" id="IPR020598">
    <property type="entry name" value="rRNA_Ade_methylase_Trfase_N"/>
</dbReference>
<dbReference type="InterPro" id="IPR011530">
    <property type="entry name" value="rRNA_adenine_dimethylase"/>
</dbReference>
<dbReference type="InterPro" id="IPR029063">
    <property type="entry name" value="SAM-dependent_MTases_sf"/>
</dbReference>
<dbReference type="NCBIfam" id="TIGR00755">
    <property type="entry name" value="ksgA"/>
    <property type="match status" value="1"/>
</dbReference>
<dbReference type="PANTHER" id="PTHR11727">
    <property type="entry name" value="DIMETHYLADENOSINE TRANSFERASE"/>
    <property type="match status" value="1"/>
</dbReference>
<dbReference type="PANTHER" id="PTHR11727:SF7">
    <property type="entry name" value="DIMETHYLADENOSINE TRANSFERASE-RELATED"/>
    <property type="match status" value="1"/>
</dbReference>
<dbReference type="Pfam" id="PF00398">
    <property type="entry name" value="RrnaAD"/>
    <property type="match status" value="1"/>
</dbReference>
<dbReference type="SMART" id="SM00650">
    <property type="entry name" value="rADc"/>
    <property type="match status" value="1"/>
</dbReference>
<dbReference type="SUPFAM" id="SSF53335">
    <property type="entry name" value="S-adenosyl-L-methionine-dependent methyltransferases"/>
    <property type="match status" value="1"/>
</dbReference>
<dbReference type="PROSITE" id="PS01131">
    <property type="entry name" value="RRNA_A_DIMETH"/>
    <property type="match status" value="1"/>
</dbReference>
<dbReference type="PROSITE" id="PS51689">
    <property type="entry name" value="SAM_RNA_A_N6_MT"/>
    <property type="match status" value="1"/>
</dbReference>
<comment type="function">
    <text evidence="1">Specifically dimethylates two adjacent adenosines (A1518 and A1519) in the loop of a conserved hairpin near the 3'-end of 16S rRNA in the 30S particle. May play a critical role in biogenesis of 30S subunits.</text>
</comment>
<comment type="catalytic activity">
    <reaction evidence="1">
        <text>adenosine(1518)/adenosine(1519) in 16S rRNA + 4 S-adenosyl-L-methionine = N(6)-dimethyladenosine(1518)/N(6)-dimethyladenosine(1519) in 16S rRNA + 4 S-adenosyl-L-homocysteine + 4 H(+)</text>
        <dbReference type="Rhea" id="RHEA:19609"/>
        <dbReference type="Rhea" id="RHEA-COMP:10232"/>
        <dbReference type="Rhea" id="RHEA-COMP:10233"/>
        <dbReference type="ChEBI" id="CHEBI:15378"/>
        <dbReference type="ChEBI" id="CHEBI:57856"/>
        <dbReference type="ChEBI" id="CHEBI:59789"/>
        <dbReference type="ChEBI" id="CHEBI:74411"/>
        <dbReference type="ChEBI" id="CHEBI:74493"/>
        <dbReference type="EC" id="2.1.1.182"/>
    </reaction>
</comment>
<comment type="subcellular location">
    <subcellularLocation>
        <location evidence="1">Cytoplasm</location>
    </subcellularLocation>
</comment>
<comment type="similarity">
    <text evidence="1">Belongs to the class I-like SAM-binding methyltransferase superfamily. rRNA adenine N(6)-methyltransferase family. RsmA subfamily.</text>
</comment>
<name>RSMA_RICBR</name>
<evidence type="ECO:0000255" key="1">
    <source>
        <dbReference type="HAMAP-Rule" id="MF_00607"/>
    </source>
</evidence>
<evidence type="ECO:0007829" key="2">
    <source>
        <dbReference type="PDB" id="4JXJ"/>
    </source>
</evidence>
<protein>
    <recommendedName>
        <fullName evidence="1">Ribosomal RNA small subunit methyltransferase A</fullName>
        <ecNumber evidence="1">2.1.1.182</ecNumber>
    </recommendedName>
    <alternativeName>
        <fullName evidence="1">16S rRNA (adenine(1518)-N(6)/adenine(1519)-N(6))-dimethyltransferase</fullName>
    </alternativeName>
    <alternativeName>
        <fullName evidence="1">16S rRNA dimethyladenosine transferase</fullName>
    </alternativeName>
    <alternativeName>
        <fullName evidence="1">16S rRNA dimethylase</fullName>
    </alternativeName>
    <alternativeName>
        <fullName evidence="1">S-adenosylmethionine-6-N', N'-adenosyl(rRNA) dimethyltransferase</fullName>
    </alternativeName>
</protein>
<feature type="chain" id="PRO_0000257338" description="Ribosomal RNA small subunit methyltransferase A">
    <location>
        <begin position="1"/>
        <end position="268"/>
    </location>
</feature>
<feature type="binding site" evidence="1">
    <location>
        <position position="23"/>
    </location>
    <ligand>
        <name>S-adenosyl-L-methionine</name>
        <dbReference type="ChEBI" id="CHEBI:59789"/>
    </ligand>
</feature>
<feature type="binding site" evidence="1">
    <location>
        <position position="25"/>
    </location>
    <ligand>
        <name>S-adenosyl-L-methionine</name>
        <dbReference type="ChEBI" id="CHEBI:59789"/>
    </ligand>
</feature>
<feature type="binding site" evidence="1">
    <location>
        <position position="50"/>
    </location>
    <ligand>
        <name>S-adenosyl-L-methionine</name>
        <dbReference type="ChEBI" id="CHEBI:59789"/>
    </ligand>
</feature>
<feature type="binding site" evidence="1">
    <location>
        <position position="72"/>
    </location>
    <ligand>
        <name>S-adenosyl-L-methionine</name>
        <dbReference type="ChEBI" id="CHEBI:59789"/>
    </ligand>
</feature>
<feature type="binding site" evidence="1">
    <location>
        <position position="97"/>
    </location>
    <ligand>
        <name>S-adenosyl-L-methionine</name>
        <dbReference type="ChEBI" id="CHEBI:59789"/>
    </ligand>
</feature>
<feature type="binding site" evidence="1">
    <location>
        <position position="116"/>
    </location>
    <ligand>
        <name>S-adenosyl-L-methionine</name>
        <dbReference type="ChEBI" id="CHEBI:59789"/>
    </ligand>
</feature>
<feature type="helix" evidence="2">
    <location>
        <begin position="28"/>
        <end position="38"/>
    </location>
</feature>
<feature type="strand" evidence="2">
    <location>
        <begin position="45"/>
        <end position="49"/>
    </location>
</feature>
<feature type="helix" evidence="2">
    <location>
        <begin position="55"/>
        <end position="61"/>
    </location>
</feature>
<feature type="strand" evidence="2">
    <location>
        <begin position="66"/>
        <end position="71"/>
    </location>
</feature>
<feature type="helix" evidence="2">
    <location>
        <begin position="75"/>
        <end position="77"/>
    </location>
</feature>
<feature type="helix" evidence="2">
    <location>
        <begin position="78"/>
        <end position="87"/>
    </location>
</feature>
<feature type="strand" evidence="2">
    <location>
        <begin position="91"/>
        <end position="94"/>
    </location>
</feature>
<feature type="helix" evidence="2">
    <location>
        <begin position="98"/>
        <end position="100"/>
    </location>
</feature>
<feature type="helix" evidence="2">
    <location>
        <begin position="103"/>
        <end position="106"/>
    </location>
</feature>
<feature type="strand" evidence="2">
    <location>
        <begin position="109"/>
        <end position="116"/>
    </location>
</feature>
<feature type="turn" evidence="2">
    <location>
        <begin position="119"/>
        <end position="121"/>
    </location>
</feature>
<feature type="helix" evidence="2">
    <location>
        <begin position="122"/>
        <end position="131"/>
    </location>
</feature>
<feature type="helix" evidence="2">
    <location>
        <begin position="132"/>
        <end position="135"/>
    </location>
</feature>
<feature type="strand" evidence="2">
    <location>
        <begin position="136"/>
        <end position="144"/>
    </location>
</feature>
<feature type="helix" evidence="2">
    <location>
        <begin position="145"/>
        <end position="152"/>
    </location>
</feature>
<feature type="strand" evidence="2">
    <location>
        <begin position="155"/>
        <end position="157"/>
    </location>
</feature>
<feature type="helix" evidence="2">
    <location>
        <begin position="162"/>
        <end position="170"/>
    </location>
</feature>
<feature type="strand" evidence="2">
    <location>
        <begin position="171"/>
        <end position="179"/>
    </location>
</feature>
<feature type="helix" evidence="2">
    <location>
        <begin position="181"/>
        <end position="183"/>
    </location>
</feature>
<feature type="strand" evidence="2">
    <location>
        <begin position="184"/>
        <end position="186"/>
    </location>
</feature>
<feature type="strand" evidence="2">
    <location>
        <begin position="192"/>
        <end position="199"/>
    </location>
</feature>
<feature type="helix" evidence="2">
    <location>
        <begin position="206"/>
        <end position="219"/>
    </location>
</feature>
<feature type="helix" evidence="2">
    <location>
        <begin position="227"/>
        <end position="230"/>
    </location>
</feature>
<feature type="turn" evidence="2">
    <location>
        <begin position="231"/>
        <end position="234"/>
    </location>
</feature>
<feature type="helix" evidence="2">
    <location>
        <begin position="238"/>
        <end position="244"/>
    </location>
</feature>
<feature type="helix" evidence="2">
    <location>
        <begin position="253"/>
        <end position="255"/>
    </location>
</feature>
<feature type="helix" evidence="2">
    <location>
        <begin position="258"/>
        <end position="265"/>
    </location>
</feature>
<accession>Q1RK29</accession>
<sequence length="268" mass="29656">MLPSIAKHAASHQIHPLKKHGQNFIFDGSLCDKIVRASGLEENSNVLEIGPGTGGLTRSILHKNPKLLTVIETDERCIPLLNEIKQYHPNLNIIKQDALKLKLSDLNTNKITIISNLPYHIGTELVIRWLKESSLVASMTLMLQKEVVERICAKPSTKAYGRLSVICSLIATVEKCFDVAPTAFYPPPKVYSAIVKLTPLENIPNSDLISKVELITKMAFAGRRKMIKSSLKNLAPNISELLAKLNISDNCRAENLTPNDYLSLASLI</sequence>
<proteinExistence type="evidence at protein level"/>
<reference key="1">
    <citation type="journal article" date="2006" name="PLoS Genet.">
        <title>Genome sequence of Rickettsia bellii illuminates the role of amoebae in gene exchanges between intracellular pathogens.</title>
        <authorList>
            <person name="Ogata H."/>
            <person name="La Scola B."/>
            <person name="Audic S."/>
            <person name="Renesto P."/>
            <person name="Blanc G."/>
            <person name="Robert C."/>
            <person name="Fournier P.-E."/>
            <person name="Claverie J.-M."/>
            <person name="Raoult D."/>
        </authorList>
    </citation>
    <scope>NUCLEOTIDE SEQUENCE [LARGE SCALE GENOMIC DNA]</scope>
    <source>
        <strain>RML369-C</strain>
    </source>
</reference>
<reference key="2">
    <citation type="submission" date="2013-05" db="PDB data bank">
        <title>Crystal structure of ribosomal RNA small subunit methyltransferase A from Rickettsia bellii determined by iodide SAD phasing.</title>
        <authorList>
            <consortium name="Seattle structural genomics center for infectious disease (SSGCID)"/>
        </authorList>
    </citation>
    <scope>X-RAY CRYSTALLOGRAPHY (2.0 ANGSTROMS)</scope>
</reference>
<organism>
    <name type="scientific">Rickettsia bellii (strain RML369-C)</name>
    <dbReference type="NCBI Taxonomy" id="336407"/>
    <lineage>
        <taxon>Bacteria</taxon>
        <taxon>Pseudomonadati</taxon>
        <taxon>Pseudomonadota</taxon>
        <taxon>Alphaproteobacteria</taxon>
        <taxon>Rickettsiales</taxon>
        <taxon>Rickettsiaceae</taxon>
        <taxon>Rickettsieae</taxon>
        <taxon>Rickettsia</taxon>
        <taxon>belli group</taxon>
    </lineage>
</organism>